<reference key="1">
    <citation type="journal article" date="2007" name="PLoS Genet.">
        <title>Patterns and implications of gene gain and loss in the evolution of Prochlorococcus.</title>
        <authorList>
            <person name="Kettler G.C."/>
            <person name="Martiny A.C."/>
            <person name="Huang K."/>
            <person name="Zucker J."/>
            <person name="Coleman M.L."/>
            <person name="Rodrigue S."/>
            <person name="Chen F."/>
            <person name="Lapidus A."/>
            <person name="Ferriera S."/>
            <person name="Johnson J."/>
            <person name="Steglich C."/>
            <person name="Church G.M."/>
            <person name="Richardson P."/>
            <person name="Chisholm S.W."/>
        </authorList>
    </citation>
    <scope>NUCLEOTIDE SEQUENCE [LARGE SCALE GENOMIC DNA]</scope>
    <source>
        <strain>NATL2A</strain>
    </source>
</reference>
<comment type="function">
    <text evidence="1">Involved in the regulation of the intracellular balance of NAD and NADP, and is a key enzyme in the biosynthesis of NADP. Catalyzes specifically the phosphorylation on 2'-hydroxyl of the adenosine moiety of NAD to yield NADP.</text>
</comment>
<comment type="catalytic activity">
    <reaction evidence="1">
        <text>NAD(+) + ATP = ADP + NADP(+) + H(+)</text>
        <dbReference type="Rhea" id="RHEA:18629"/>
        <dbReference type="ChEBI" id="CHEBI:15378"/>
        <dbReference type="ChEBI" id="CHEBI:30616"/>
        <dbReference type="ChEBI" id="CHEBI:57540"/>
        <dbReference type="ChEBI" id="CHEBI:58349"/>
        <dbReference type="ChEBI" id="CHEBI:456216"/>
        <dbReference type="EC" id="2.7.1.23"/>
    </reaction>
</comment>
<comment type="cofactor">
    <cofactor evidence="1">
        <name>a divalent metal cation</name>
        <dbReference type="ChEBI" id="CHEBI:60240"/>
    </cofactor>
</comment>
<comment type="subcellular location">
    <subcellularLocation>
        <location evidence="1">Cytoplasm</location>
    </subcellularLocation>
</comment>
<comment type="similarity">
    <text evidence="1">Belongs to the NAD kinase family.</text>
</comment>
<gene>
    <name evidence="1" type="primary">nadK2</name>
    <name type="ordered locus">PMN2A_0835</name>
</gene>
<accession>Q46JK2</accession>
<keyword id="KW-0067">ATP-binding</keyword>
<keyword id="KW-0963">Cytoplasm</keyword>
<keyword id="KW-0418">Kinase</keyword>
<keyword id="KW-0520">NAD</keyword>
<keyword id="KW-0521">NADP</keyword>
<keyword id="KW-0547">Nucleotide-binding</keyword>
<keyword id="KW-1185">Reference proteome</keyword>
<keyword id="KW-0808">Transferase</keyword>
<evidence type="ECO:0000255" key="1">
    <source>
        <dbReference type="HAMAP-Rule" id="MF_00361"/>
    </source>
</evidence>
<proteinExistence type="inferred from homology"/>
<sequence>MPRVGLIVNDGKELAVKTAKTFQKKLEDSGFEVVRVSSAGGLLGFTNPDQYMSSQGYNSCIPEGFDSSILFAVVLGGDGTVLSAARQTAPLGIPILTVNTGHLGFLAEAYLSDIDKIFKHLVARQWSIEKRTSLVVSVMRGDQCRWEALCLNEMALHREPMTSMCHFEISVGRHAPVDISADGVILSTPTGSTAYSLSAGGPVITPDCPVLQLTPVSPHSLASRALVFSNEEPVTVFPATPERLMMVVDGSAGCYVWPEDRVLIRKSDHPVKFIRLSDHEFFQVLRNKLGWGLPHVAKPDKT</sequence>
<organism>
    <name type="scientific">Prochlorococcus marinus (strain NATL2A)</name>
    <dbReference type="NCBI Taxonomy" id="59920"/>
    <lineage>
        <taxon>Bacteria</taxon>
        <taxon>Bacillati</taxon>
        <taxon>Cyanobacteriota</taxon>
        <taxon>Cyanophyceae</taxon>
        <taxon>Synechococcales</taxon>
        <taxon>Prochlorococcaceae</taxon>
        <taxon>Prochlorococcus</taxon>
    </lineage>
</organism>
<protein>
    <recommendedName>
        <fullName evidence="1">NAD kinase 2</fullName>
        <ecNumber evidence="1">2.7.1.23</ecNumber>
    </recommendedName>
    <alternativeName>
        <fullName evidence="1">ATP-dependent NAD kinase 2</fullName>
    </alternativeName>
</protein>
<feature type="chain" id="PRO_0000229672" description="NAD kinase 2">
    <location>
        <begin position="1"/>
        <end position="302"/>
    </location>
</feature>
<feature type="active site" description="Proton acceptor" evidence="1">
    <location>
        <position position="78"/>
    </location>
</feature>
<feature type="binding site" evidence="1">
    <location>
        <begin position="78"/>
        <end position="79"/>
    </location>
    <ligand>
        <name>NAD(+)</name>
        <dbReference type="ChEBI" id="CHEBI:57540"/>
    </ligand>
</feature>
<feature type="binding site" evidence="1">
    <location>
        <begin position="152"/>
        <end position="153"/>
    </location>
    <ligand>
        <name>NAD(+)</name>
        <dbReference type="ChEBI" id="CHEBI:57540"/>
    </ligand>
</feature>
<feature type="binding site" evidence="1">
    <location>
        <position position="182"/>
    </location>
    <ligand>
        <name>NAD(+)</name>
        <dbReference type="ChEBI" id="CHEBI:57540"/>
    </ligand>
</feature>
<feature type="binding site" evidence="1">
    <location>
        <begin position="193"/>
        <end position="198"/>
    </location>
    <ligand>
        <name>NAD(+)</name>
        <dbReference type="ChEBI" id="CHEBI:57540"/>
    </ligand>
</feature>
<name>NADK2_PROMT</name>
<dbReference type="EC" id="2.7.1.23" evidence="1"/>
<dbReference type="EMBL" id="CP000095">
    <property type="protein sequence ID" value="AAZ58326.1"/>
    <property type="molecule type" value="Genomic_DNA"/>
</dbReference>
<dbReference type="RefSeq" id="WP_011294923.1">
    <property type="nucleotide sequence ID" value="NC_007335.2"/>
</dbReference>
<dbReference type="SMR" id="Q46JK2"/>
<dbReference type="STRING" id="59920.PMN2A_0835"/>
<dbReference type="KEGG" id="pmn:PMN2A_0835"/>
<dbReference type="HOGENOM" id="CLU_008831_0_1_3"/>
<dbReference type="OrthoDB" id="9774737at2"/>
<dbReference type="PhylomeDB" id="Q46JK2"/>
<dbReference type="Proteomes" id="UP000002535">
    <property type="component" value="Chromosome"/>
</dbReference>
<dbReference type="GO" id="GO:0005737">
    <property type="term" value="C:cytoplasm"/>
    <property type="evidence" value="ECO:0007669"/>
    <property type="project" value="UniProtKB-SubCell"/>
</dbReference>
<dbReference type="GO" id="GO:0005524">
    <property type="term" value="F:ATP binding"/>
    <property type="evidence" value="ECO:0007669"/>
    <property type="project" value="UniProtKB-KW"/>
</dbReference>
<dbReference type="GO" id="GO:0046872">
    <property type="term" value="F:metal ion binding"/>
    <property type="evidence" value="ECO:0007669"/>
    <property type="project" value="UniProtKB-UniRule"/>
</dbReference>
<dbReference type="GO" id="GO:0051287">
    <property type="term" value="F:NAD binding"/>
    <property type="evidence" value="ECO:0007669"/>
    <property type="project" value="UniProtKB-ARBA"/>
</dbReference>
<dbReference type="GO" id="GO:0003951">
    <property type="term" value="F:NAD+ kinase activity"/>
    <property type="evidence" value="ECO:0007669"/>
    <property type="project" value="UniProtKB-UniRule"/>
</dbReference>
<dbReference type="GO" id="GO:0019674">
    <property type="term" value="P:NAD metabolic process"/>
    <property type="evidence" value="ECO:0007669"/>
    <property type="project" value="InterPro"/>
</dbReference>
<dbReference type="GO" id="GO:0006741">
    <property type="term" value="P:NADP biosynthetic process"/>
    <property type="evidence" value="ECO:0007669"/>
    <property type="project" value="UniProtKB-UniRule"/>
</dbReference>
<dbReference type="Gene3D" id="3.40.50.10330">
    <property type="entry name" value="Probable inorganic polyphosphate/atp-NAD kinase, domain 1"/>
    <property type="match status" value="1"/>
</dbReference>
<dbReference type="Gene3D" id="2.60.200.30">
    <property type="entry name" value="Probable inorganic polyphosphate/atp-NAD kinase, domain 2"/>
    <property type="match status" value="1"/>
</dbReference>
<dbReference type="HAMAP" id="MF_00361">
    <property type="entry name" value="NAD_kinase"/>
    <property type="match status" value="1"/>
</dbReference>
<dbReference type="InterPro" id="IPR017438">
    <property type="entry name" value="ATP-NAD_kinase_N"/>
</dbReference>
<dbReference type="InterPro" id="IPR017437">
    <property type="entry name" value="ATP-NAD_kinase_PpnK-typ_C"/>
</dbReference>
<dbReference type="InterPro" id="IPR016064">
    <property type="entry name" value="NAD/diacylglycerol_kinase_sf"/>
</dbReference>
<dbReference type="InterPro" id="IPR002504">
    <property type="entry name" value="NADK"/>
</dbReference>
<dbReference type="NCBIfam" id="NF002732">
    <property type="entry name" value="PRK02649.1"/>
    <property type="match status" value="1"/>
</dbReference>
<dbReference type="PANTHER" id="PTHR20275">
    <property type="entry name" value="NAD KINASE"/>
    <property type="match status" value="1"/>
</dbReference>
<dbReference type="PANTHER" id="PTHR20275:SF13">
    <property type="entry name" value="NAD KINASE 2"/>
    <property type="match status" value="1"/>
</dbReference>
<dbReference type="Pfam" id="PF01513">
    <property type="entry name" value="NAD_kinase"/>
    <property type="match status" value="1"/>
</dbReference>
<dbReference type="Pfam" id="PF20143">
    <property type="entry name" value="NAD_kinase_C"/>
    <property type="match status" value="1"/>
</dbReference>
<dbReference type="SUPFAM" id="SSF111331">
    <property type="entry name" value="NAD kinase/diacylglycerol kinase-like"/>
    <property type="match status" value="1"/>
</dbReference>